<proteinExistence type="inferred from homology"/>
<keyword id="KW-0413">Isomerase</keyword>
<keyword id="KW-0460">Magnesium</keyword>
<keyword id="KW-0479">Metal-binding</keyword>
<keyword id="KW-0597">Phosphoprotein</keyword>
<keyword id="KW-1185">Reference proteome</keyword>
<evidence type="ECO:0000255" key="1">
    <source>
        <dbReference type="HAMAP-Rule" id="MF_01554"/>
    </source>
</evidence>
<sequence length="446" mass="48159">MQKKYFGTDGIRGKVGNSLINAEFMLKLGWAVGRVLANSHSATVLIGKDTRISGYMIESALQAGLSAAGVNIKLTGPMPTPAIAYLTHSVRADAGIVISASHNHYPDNGVKFFNKDGFKLSDELELAIEKQIDKPMKTVVADRLGKAARMNEAHGRYIEFCKSTFPSNLTLKGLKIVVDCANGAAYAVAPSIFHELGAEVVAIADDPDGFNINQTCGATDTAHLQEMVVKHNADVGIAFDGDGDRLIMVDHHGLRVDGDELLCIMAIDRFYLKENAPLGVVGTIMSNLGLEHTLKRHHIAFERSPVGDRYVLDLMQQKGWFLGGESSGHIVDLGFTTTGDGVITALQILRIMQQAEKPLADLKKVMVKHPQVLINVPIKGILDIAQNPNIKKAITEAEKQLNGAGRILLRPSGTEPVIRVMVEGSDEGIVRQTAEMLAAAVQQSTL</sequence>
<reference key="1">
    <citation type="journal article" date="2003" name="Proc. Natl. Acad. Sci. U.S.A.">
        <title>Complete genome sequence of the Q-fever pathogen, Coxiella burnetii.</title>
        <authorList>
            <person name="Seshadri R."/>
            <person name="Paulsen I.T."/>
            <person name="Eisen J.A."/>
            <person name="Read T.D."/>
            <person name="Nelson K.E."/>
            <person name="Nelson W.C."/>
            <person name="Ward N.L."/>
            <person name="Tettelin H."/>
            <person name="Davidsen T.M."/>
            <person name="Beanan M.J."/>
            <person name="DeBoy R.T."/>
            <person name="Daugherty S.C."/>
            <person name="Brinkac L.M."/>
            <person name="Madupu R."/>
            <person name="Dodson R.J."/>
            <person name="Khouri H.M."/>
            <person name="Lee K.H."/>
            <person name="Carty H.A."/>
            <person name="Scanlan D."/>
            <person name="Heinzen R.A."/>
            <person name="Thompson H.A."/>
            <person name="Samuel J.E."/>
            <person name="Fraser C.M."/>
            <person name="Heidelberg J.F."/>
        </authorList>
    </citation>
    <scope>NUCLEOTIDE SEQUENCE [LARGE SCALE GENOMIC DNA]</scope>
    <source>
        <strain>RSA 493 / Nine Mile phase I</strain>
    </source>
</reference>
<feature type="chain" id="PRO_0000147881" description="Phosphoglucosamine mutase">
    <location>
        <begin position="1"/>
        <end position="446"/>
    </location>
</feature>
<feature type="active site" description="Phosphoserine intermediate" evidence="1">
    <location>
        <position position="101"/>
    </location>
</feature>
<feature type="binding site" description="via phosphate group" evidence="1">
    <location>
        <position position="101"/>
    </location>
    <ligand>
        <name>Mg(2+)</name>
        <dbReference type="ChEBI" id="CHEBI:18420"/>
    </ligand>
</feature>
<feature type="binding site" evidence="1">
    <location>
        <position position="240"/>
    </location>
    <ligand>
        <name>Mg(2+)</name>
        <dbReference type="ChEBI" id="CHEBI:18420"/>
    </ligand>
</feature>
<feature type="binding site" evidence="1">
    <location>
        <position position="242"/>
    </location>
    <ligand>
        <name>Mg(2+)</name>
        <dbReference type="ChEBI" id="CHEBI:18420"/>
    </ligand>
</feature>
<feature type="binding site" evidence="1">
    <location>
        <position position="244"/>
    </location>
    <ligand>
        <name>Mg(2+)</name>
        <dbReference type="ChEBI" id="CHEBI:18420"/>
    </ligand>
</feature>
<feature type="modified residue" description="Phosphoserine" evidence="1">
    <location>
        <position position="101"/>
    </location>
</feature>
<organism>
    <name type="scientific">Coxiella burnetii (strain RSA 493 / Nine Mile phase I)</name>
    <dbReference type="NCBI Taxonomy" id="227377"/>
    <lineage>
        <taxon>Bacteria</taxon>
        <taxon>Pseudomonadati</taxon>
        <taxon>Pseudomonadota</taxon>
        <taxon>Gammaproteobacteria</taxon>
        <taxon>Legionellales</taxon>
        <taxon>Coxiellaceae</taxon>
        <taxon>Coxiella</taxon>
    </lineage>
</organism>
<gene>
    <name evidence="1" type="primary">glmM</name>
    <name type="ordered locus">CBU_1350</name>
</gene>
<dbReference type="EC" id="5.4.2.10" evidence="1"/>
<dbReference type="EMBL" id="AE016828">
    <property type="protein sequence ID" value="AAO90853.1"/>
    <property type="molecule type" value="Genomic_DNA"/>
</dbReference>
<dbReference type="RefSeq" id="NP_820339.1">
    <property type="nucleotide sequence ID" value="NC_002971.4"/>
</dbReference>
<dbReference type="RefSeq" id="WP_010958170.1">
    <property type="nucleotide sequence ID" value="NC_002971.4"/>
</dbReference>
<dbReference type="SMR" id="Q83BY7"/>
<dbReference type="STRING" id="227377.CBU_1350"/>
<dbReference type="EnsemblBacteria" id="AAO90853">
    <property type="protein sequence ID" value="AAO90853"/>
    <property type="gene ID" value="CBU_1350"/>
</dbReference>
<dbReference type="GeneID" id="1209256"/>
<dbReference type="KEGG" id="cbu:CBU_1350"/>
<dbReference type="PATRIC" id="fig|227377.7.peg.1344"/>
<dbReference type="eggNOG" id="COG1109">
    <property type="taxonomic scope" value="Bacteria"/>
</dbReference>
<dbReference type="HOGENOM" id="CLU_016950_7_0_6"/>
<dbReference type="OrthoDB" id="9803322at2"/>
<dbReference type="Proteomes" id="UP000002671">
    <property type="component" value="Chromosome"/>
</dbReference>
<dbReference type="GO" id="GO:0005829">
    <property type="term" value="C:cytosol"/>
    <property type="evidence" value="ECO:0000318"/>
    <property type="project" value="GO_Central"/>
</dbReference>
<dbReference type="GO" id="GO:0000287">
    <property type="term" value="F:magnesium ion binding"/>
    <property type="evidence" value="ECO:0007669"/>
    <property type="project" value="UniProtKB-UniRule"/>
</dbReference>
<dbReference type="GO" id="GO:0008966">
    <property type="term" value="F:phosphoglucosamine mutase activity"/>
    <property type="evidence" value="ECO:0000318"/>
    <property type="project" value="GO_Central"/>
</dbReference>
<dbReference type="GO" id="GO:0004615">
    <property type="term" value="F:phosphomannomutase activity"/>
    <property type="evidence" value="ECO:0000318"/>
    <property type="project" value="GO_Central"/>
</dbReference>
<dbReference type="GO" id="GO:0005975">
    <property type="term" value="P:carbohydrate metabolic process"/>
    <property type="evidence" value="ECO:0007669"/>
    <property type="project" value="InterPro"/>
</dbReference>
<dbReference type="GO" id="GO:0009252">
    <property type="term" value="P:peptidoglycan biosynthetic process"/>
    <property type="evidence" value="ECO:0000318"/>
    <property type="project" value="GO_Central"/>
</dbReference>
<dbReference type="GO" id="GO:0006048">
    <property type="term" value="P:UDP-N-acetylglucosamine biosynthetic process"/>
    <property type="evidence" value="ECO:0000318"/>
    <property type="project" value="GO_Central"/>
</dbReference>
<dbReference type="CDD" id="cd05802">
    <property type="entry name" value="GlmM"/>
    <property type="match status" value="1"/>
</dbReference>
<dbReference type="FunFam" id="3.30.310.50:FF:000001">
    <property type="entry name" value="Phosphoglucosamine mutase"/>
    <property type="match status" value="1"/>
</dbReference>
<dbReference type="FunFam" id="3.40.120.10:FF:000001">
    <property type="entry name" value="Phosphoglucosamine mutase"/>
    <property type="match status" value="1"/>
</dbReference>
<dbReference type="FunFam" id="3.40.120.10:FF:000003">
    <property type="entry name" value="Phosphoglucosamine mutase"/>
    <property type="match status" value="1"/>
</dbReference>
<dbReference type="Gene3D" id="3.40.120.10">
    <property type="entry name" value="Alpha-D-Glucose-1,6-Bisphosphate, subunit A, domain 3"/>
    <property type="match status" value="3"/>
</dbReference>
<dbReference type="Gene3D" id="3.30.310.50">
    <property type="entry name" value="Alpha-D-phosphohexomutase, C-terminal domain"/>
    <property type="match status" value="1"/>
</dbReference>
<dbReference type="HAMAP" id="MF_01554_B">
    <property type="entry name" value="GlmM_B"/>
    <property type="match status" value="1"/>
</dbReference>
<dbReference type="InterPro" id="IPR005844">
    <property type="entry name" value="A-D-PHexomutase_a/b/a-I"/>
</dbReference>
<dbReference type="InterPro" id="IPR016055">
    <property type="entry name" value="A-D-PHexomutase_a/b/a-I/II/III"/>
</dbReference>
<dbReference type="InterPro" id="IPR005845">
    <property type="entry name" value="A-D-PHexomutase_a/b/a-II"/>
</dbReference>
<dbReference type="InterPro" id="IPR005846">
    <property type="entry name" value="A-D-PHexomutase_a/b/a-III"/>
</dbReference>
<dbReference type="InterPro" id="IPR005843">
    <property type="entry name" value="A-D-PHexomutase_C"/>
</dbReference>
<dbReference type="InterPro" id="IPR036900">
    <property type="entry name" value="A-D-PHexomutase_C_sf"/>
</dbReference>
<dbReference type="InterPro" id="IPR005841">
    <property type="entry name" value="Alpha-D-phosphohexomutase_SF"/>
</dbReference>
<dbReference type="InterPro" id="IPR006352">
    <property type="entry name" value="GlmM_bact"/>
</dbReference>
<dbReference type="InterPro" id="IPR050060">
    <property type="entry name" value="Phosphoglucosamine_mutase"/>
</dbReference>
<dbReference type="NCBIfam" id="TIGR01455">
    <property type="entry name" value="glmM"/>
    <property type="match status" value="1"/>
</dbReference>
<dbReference type="NCBIfam" id="NF008139">
    <property type="entry name" value="PRK10887.1"/>
    <property type="match status" value="1"/>
</dbReference>
<dbReference type="PANTHER" id="PTHR42946:SF1">
    <property type="entry name" value="PHOSPHOGLUCOMUTASE (ALPHA-D-GLUCOSE-1,6-BISPHOSPHATE-DEPENDENT)"/>
    <property type="match status" value="1"/>
</dbReference>
<dbReference type="PANTHER" id="PTHR42946">
    <property type="entry name" value="PHOSPHOHEXOSE MUTASE"/>
    <property type="match status" value="1"/>
</dbReference>
<dbReference type="Pfam" id="PF02878">
    <property type="entry name" value="PGM_PMM_I"/>
    <property type="match status" value="1"/>
</dbReference>
<dbReference type="Pfam" id="PF02879">
    <property type="entry name" value="PGM_PMM_II"/>
    <property type="match status" value="1"/>
</dbReference>
<dbReference type="Pfam" id="PF02880">
    <property type="entry name" value="PGM_PMM_III"/>
    <property type="match status" value="1"/>
</dbReference>
<dbReference type="Pfam" id="PF00408">
    <property type="entry name" value="PGM_PMM_IV"/>
    <property type="match status" value="1"/>
</dbReference>
<dbReference type="PRINTS" id="PR00509">
    <property type="entry name" value="PGMPMM"/>
</dbReference>
<dbReference type="SUPFAM" id="SSF55957">
    <property type="entry name" value="Phosphoglucomutase, C-terminal domain"/>
    <property type="match status" value="1"/>
</dbReference>
<dbReference type="SUPFAM" id="SSF53738">
    <property type="entry name" value="Phosphoglucomutase, first 3 domains"/>
    <property type="match status" value="3"/>
</dbReference>
<comment type="function">
    <text evidence="1">Catalyzes the conversion of glucosamine-6-phosphate to glucosamine-1-phosphate.</text>
</comment>
<comment type="catalytic activity">
    <reaction evidence="1">
        <text>alpha-D-glucosamine 1-phosphate = D-glucosamine 6-phosphate</text>
        <dbReference type="Rhea" id="RHEA:23424"/>
        <dbReference type="ChEBI" id="CHEBI:58516"/>
        <dbReference type="ChEBI" id="CHEBI:58725"/>
        <dbReference type="EC" id="5.4.2.10"/>
    </reaction>
</comment>
<comment type="cofactor">
    <cofactor evidence="1">
        <name>Mg(2+)</name>
        <dbReference type="ChEBI" id="CHEBI:18420"/>
    </cofactor>
    <text evidence="1">Binds 1 Mg(2+) ion per subunit.</text>
</comment>
<comment type="PTM">
    <text evidence="1">Activated by phosphorylation.</text>
</comment>
<comment type="similarity">
    <text evidence="1">Belongs to the phosphohexose mutase family.</text>
</comment>
<name>GLMM_COXBU</name>
<accession>Q83BY7</accession>
<protein>
    <recommendedName>
        <fullName evidence="1">Phosphoglucosamine mutase</fullName>
        <ecNumber evidence="1">5.4.2.10</ecNumber>
    </recommendedName>
</protein>